<evidence type="ECO:0000255" key="1"/>
<name>YOCC_BACSU</name>
<organism>
    <name type="scientific">Bacillus subtilis (strain 168)</name>
    <dbReference type="NCBI Taxonomy" id="224308"/>
    <lineage>
        <taxon>Bacteria</taxon>
        <taxon>Bacillati</taxon>
        <taxon>Bacillota</taxon>
        <taxon>Bacilli</taxon>
        <taxon>Bacillales</taxon>
        <taxon>Bacillaceae</taxon>
        <taxon>Bacillus</taxon>
    </lineage>
</organism>
<protein>
    <recommendedName>
        <fullName>Uncharacterized protein YocC</fullName>
    </recommendedName>
</protein>
<accession>O35042</accession>
<accession>Q796D0</accession>
<sequence>MFTVKEKNRQELEEELNDLEFQIYRMQENMKDLSKDAKVLGIDQSKHDEWMIVSSIDDGQTCKIMLTDCKTAYRGKGCFSLVASYKDDAIHIGDIKGPPNHGFGSICMKYLKDIARDHNIPKVTGDIAKRDWNHVDRLIHFYEKHHFKVCIDHDTQSGSIKWVDL</sequence>
<dbReference type="EMBL" id="AF027868">
    <property type="protein sequence ID" value="AAB84434.1"/>
    <property type="molecule type" value="Genomic_DNA"/>
</dbReference>
<dbReference type="EMBL" id="AL009126">
    <property type="protein sequence ID" value="CAB13808.1"/>
    <property type="molecule type" value="Genomic_DNA"/>
</dbReference>
<dbReference type="PIR" id="H69900">
    <property type="entry name" value="H69900"/>
</dbReference>
<dbReference type="RefSeq" id="NP_389797.1">
    <property type="nucleotide sequence ID" value="NC_000964.3"/>
</dbReference>
<dbReference type="RefSeq" id="WP_004399390.1">
    <property type="nucleotide sequence ID" value="NZ_OZ025638.1"/>
</dbReference>
<dbReference type="FunCoup" id="O35042">
    <property type="interactions" value="128"/>
</dbReference>
<dbReference type="STRING" id="224308.BSU19160"/>
<dbReference type="PaxDb" id="224308-BSU19160"/>
<dbReference type="EnsemblBacteria" id="CAB13808">
    <property type="protein sequence ID" value="CAB13808"/>
    <property type="gene ID" value="BSU_19160"/>
</dbReference>
<dbReference type="GeneID" id="939666"/>
<dbReference type="KEGG" id="bsu:BSU19160"/>
<dbReference type="PATRIC" id="fig|224308.179.peg.2094"/>
<dbReference type="eggNOG" id="ENOG502ZC8R">
    <property type="taxonomic scope" value="Bacteria"/>
</dbReference>
<dbReference type="InParanoid" id="O35042"/>
<dbReference type="OrthoDB" id="2233009at2"/>
<dbReference type="BioCyc" id="BSUB:BSU19160-MONOMER"/>
<dbReference type="Proteomes" id="UP000001570">
    <property type="component" value="Chromosome"/>
</dbReference>
<dbReference type="Gene3D" id="3.40.630.30">
    <property type="match status" value="1"/>
</dbReference>
<dbReference type="InterPro" id="IPR016181">
    <property type="entry name" value="Acyl_CoA_acyltransferase"/>
</dbReference>
<dbReference type="SUPFAM" id="SSF55729">
    <property type="entry name" value="Acyl-CoA N-acyltransferases (Nat)"/>
    <property type="match status" value="1"/>
</dbReference>
<reference key="1">
    <citation type="submission" date="1997-11" db="EMBL/GenBank/DDBJ databases">
        <title>Sequence analysis of the Bacillus subtilis chromosome region between the terC and odhAB loci cloned in a yeast artificial chromosome.</title>
        <authorList>
            <person name="Lapidus A."/>
            <person name="Galleron N."/>
            <person name="Sorokin A."/>
            <person name="Ehrlich S.D."/>
        </authorList>
    </citation>
    <scope>NUCLEOTIDE SEQUENCE [GENOMIC DNA]</scope>
</reference>
<reference key="2">
    <citation type="journal article" date="1997" name="Nature">
        <title>The complete genome sequence of the Gram-positive bacterium Bacillus subtilis.</title>
        <authorList>
            <person name="Kunst F."/>
            <person name="Ogasawara N."/>
            <person name="Moszer I."/>
            <person name="Albertini A.M."/>
            <person name="Alloni G."/>
            <person name="Azevedo V."/>
            <person name="Bertero M.G."/>
            <person name="Bessieres P."/>
            <person name="Bolotin A."/>
            <person name="Borchert S."/>
            <person name="Borriss R."/>
            <person name="Boursier L."/>
            <person name="Brans A."/>
            <person name="Braun M."/>
            <person name="Brignell S.C."/>
            <person name="Bron S."/>
            <person name="Brouillet S."/>
            <person name="Bruschi C.V."/>
            <person name="Caldwell B."/>
            <person name="Capuano V."/>
            <person name="Carter N.M."/>
            <person name="Choi S.-K."/>
            <person name="Codani J.-J."/>
            <person name="Connerton I.F."/>
            <person name="Cummings N.J."/>
            <person name="Daniel R.A."/>
            <person name="Denizot F."/>
            <person name="Devine K.M."/>
            <person name="Duesterhoeft A."/>
            <person name="Ehrlich S.D."/>
            <person name="Emmerson P.T."/>
            <person name="Entian K.-D."/>
            <person name="Errington J."/>
            <person name="Fabret C."/>
            <person name="Ferrari E."/>
            <person name="Foulger D."/>
            <person name="Fritz C."/>
            <person name="Fujita M."/>
            <person name="Fujita Y."/>
            <person name="Fuma S."/>
            <person name="Galizzi A."/>
            <person name="Galleron N."/>
            <person name="Ghim S.-Y."/>
            <person name="Glaser P."/>
            <person name="Goffeau A."/>
            <person name="Golightly E.J."/>
            <person name="Grandi G."/>
            <person name="Guiseppi G."/>
            <person name="Guy B.J."/>
            <person name="Haga K."/>
            <person name="Haiech J."/>
            <person name="Harwood C.R."/>
            <person name="Henaut A."/>
            <person name="Hilbert H."/>
            <person name="Holsappel S."/>
            <person name="Hosono S."/>
            <person name="Hullo M.-F."/>
            <person name="Itaya M."/>
            <person name="Jones L.-M."/>
            <person name="Joris B."/>
            <person name="Karamata D."/>
            <person name="Kasahara Y."/>
            <person name="Klaerr-Blanchard M."/>
            <person name="Klein C."/>
            <person name="Kobayashi Y."/>
            <person name="Koetter P."/>
            <person name="Koningstein G."/>
            <person name="Krogh S."/>
            <person name="Kumano M."/>
            <person name="Kurita K."/>
            <person name="Lapidus A."/>
            <person name="Lardinois S."/>
            <person name="Lauber J."/>
            <person name="Lazarevic V."/>
            <person name="Lee S.-M."/>
            <person name="Levine A."/>
            <person name="Liu H."/>
            <person name="Masuda S."/>
            <person name="Mauel C."/>
            <person name="Medigue C."/>
            <person name="Medina N."/>
            <person name="Mellado R.P."/>
            <person name="Mizuno M."/>
            <person name="Moestl D."/>
            <person name="Nakai S."/>
            <person name="Noback M."/>
            <person name="Noone D."/>
            <person name="O'Reilly M."/>
            <person name="Ogawa K."/>
            <person name="Ogiwara A."/>
            <person name="Oudega B."/>
            <person name="Park S.-H."/>
            <person name="Parro V."/>
            <person name="Pohl T.M."/>
            <person name="Portetelle D."/>
            <person name="Porwollik S."/>
            <person name="Prescott A.M."/>
            <person name="Presecan E."/>
            <person name="Pujic P."/>
            <person name="Purnelle B."/>
            <person name="Rapoport G."/>
            <person name="Rey M."/>
            <person name="Reynolds S."/>
            <person name="Rieger M."/>
            <person name="Rivolta C."/>
            <person name="Rocha E."/>
            <person name="Roche B."/>
            <person name="Rose M."/>
            <person name="Sadaie Y."/>
            <person name="Sato T."/>
            <person name="Scanlan E."/>
            <person name="Schleich S."/>
            <person name="Schroeter R."/>
            <person name="Scoffone F."/>
            <person name="Sekiguchi J."/>
            <person name="Sekowska A."/>
            <person name="Seror S.J."/>
            <person name="Serror P."/>
            <person name="Shin B.-S."/>
            <person name="Soldo B."/>
            <person name="Sorokin A."/>
            <person name="Tacconi E."/>
            <person name="Takagi T."/>
            <person name="Takahashi H."/>
            <person name="Takemaru K."/>
            <person name="Takeuchi M."/>
            <person name="Tamakoshi A."/>
            <person name="Tanaka T."/>
            <person name="Terpstra P."/>
            <person name="Tognoni A."/>
            <person name="Tosato V."/>
            <person name="Uchiyama S."/>
            <person name="Vandenbol M."/>
            <person name="Vannier F."/>
            <person name="Vassarotti A."/>
            <person name="Viari A."/>
            <person name="Wambutt R."/>
            <person name="Wedler E."/>
            <person name="Wedler H."/>
            <person name="Weitzenegger T."/>
            <person name="Winters P."/>
            <person name="Wipat A."/>
            <person name="Yamamoto H."/>
            <person name="Yamane K."/>
            <person name="Yasumoto K."/>
            <person name="Yata K."/>
            <person name="Yoshida K."/>
            <person name="Yoshikawa H.-F."/>
            <person name="Zumstein E."/>
            <person name="Yoshikawa H."/>
            <person name="Danchin A."/>
        </authorList>
    </citation>
    <scope>NUCLEOTIDE SEQUENCE [LARGE SCALE GENOMIC DNA]</scope>
    <source>
        <strain>168</strain>
    </source>
</reference>
<proteinExistence type="predicted"/>
<feature type="chain" id="PRO_0000375910" description="Uncharacterized protein YocC">
    <location>
        <begin position="1"/>
        <end position="165"/>
    </location>
</feature>
<feature type="coiled-coil region" evidence="1">
    <location>
        <begin position="1"/>
        <end position="38"/>
    </location>
</feature>
<keyword id="KW-0175">Coiled coil</keyword>
<keyword id="KW-1185">Reference proteome</keyword>
<gene>
    <name type="primary">yocC</name>
    <name type="ordered locus">BSU19160</name>
</gene>